<reference key="1">
    <citation type="journal article" date="2000" name="Science">
        <title>The genome sequence of Drosophila melanogaster.</title>
        <authorList>
            <person name="Adams M.D."/>
            <person name="Celniker S.E."/>
            <person name="Holt R.A."/>
            <person name="Evans C.A."/>
            <person name="Gocayne J.D."/>
            <person name="Amanatides P.G."/>
            <person name="Scherer S.E."/>
            <person name="Li P.W."/>
            <person name="Hoskins R.A."/>
            <person name="Galle R.F."/>
            <person name="George R.A."/>
            <person name="Lewis S.E."/>
            <person name="Richards S."/>
            <person name="Ashburner M."/>
            <person name="Henderson S.N."/>
            <person name="Sutton G.G."/>
            <person name="Wortman J.R."/>
            <person name="Yandell M.D."/>
            <person name="Zhang Q."/>
            <person name="Chen L.X."/>
            <person name="Brandon R.C."/>
            <person name="Rogers Y.-H.C."/>
            <person name="Blazej R.G."/>
            <person name="Champe M."/>
            <person name="Pfeiffer B.D."/>
            <person name="Wan K.H."/>
            <person name="Doyle C."/>
            <person name="Baxter E.G."/>
            <person name="Helt G."/>
            <person name="Nelson C.R."/>
            <person name="Miklos G.L.G."/>
            <person name="Abril J.F."/>
            <person name="Agbayani A."/>
            <person name="An H.-J."/>
            <person name="Andrews-Pfannkoch C."/>
            <person name="Baldwin D."/>
            <person name="Ballew R.M."/>
            <person name="Basu A."/>
            <person name="Baxendale J."/>
            <person name="Bayraktaroglu L."/>
            <person name="Beasley E.M."/>
            <person name="Beeson K.Y."/>
            <person name="Benos P.V."/>
            <person name="Berman B.P."/>
            <person name="Bhandari D."/>
            <person name="Bolshakov S."/>
            <person name="Borkova D."/>
            <person name="Botchan M.R."/>
            <person name="Bouck J."/>
            <person name="Brokstein P."/>
            <person name="Brottier P."/>
            <person name="Burtis K.C."/>
            <person name="Busam D.A."/>
            <person name="Butler H."/>
            <person name="Cadieu E."/>
            <person name="Center A."/>
            <person name="Chandra I."/>
            <person name="Cherry J.M."/>
            <person name="Cawley S."/>
            <person name="Dahlke C."/>
            <person name="Davenport L.B."/>
            <person name="Davies P."/>
            <person name="de Pablos B."/>
            <person name="Delcher A."/>
            <person name="Deng Z."/>
            <person name="Mays A.D."/>
            <person name="Dew I."/>
            <person name="Dietz S.M."/>
            <person name="Dodson K."/>
            <person name="Doup L.E."/>
            <person name="Downes M."/>
            <person name="Dugan-Rocha S."/>
            <person name="Dunkov B.C."/>
            <person name="Dunn P."/>
            <person name="Durbin K.J."/>
            <person name="Evangelista C.C."/>
            <person name="Ferraz C."/>
            <person name="Ferriera S."/>
            <person name="Fleischmann W."/>
            <person name="Fosler C."/>
            <person name="Gabrielian A.E."/>
            <person name="Garg N.S."/>
            <person name="Gelbart W.M."/>
            <person name="Glasser K."/>
            <person name="Glodek A."/>
            <person name="Gong F."/>
            <person name="Gorrell J.H."/>
            <person name="Gu Z."/>
            <person name="Guan P."/>
            <person name="Harris M."/>
            <person name="Harris N.L."/>
            <person name="Harvey D.A."/>
            <person name="Heiman T.J."/>
            <person name="Hernandez J.R."/>
            <person name="Houck J."/>
            <person name="Hostin D."/>
            <person name="Houston K.A."/>
            <person name="Howland T.J."/>
            <person name="Wei M.-H."/>
            <person name="Ibegwam C."/>
            <person name="Jalali M."/>
            <person name="Kalush F."/>
            <person name="Karpen G.H."/>
            <person name="Ke Z."/>
            <person name="Kennison J.A."/>
            <person name="Ketchum K.A."/>
            <person name="Kimmel B.E."/>
            <person name="Kodira C.D."/>
            <person name="Kraft C.L."/>
            <person name="Kravitz S."/>
            <person name="Kulp D."/>
            <person name="Lai Z."/>
            <person name="Lasko P."/>
            <person name="Lei Y."/>
            <person name="Levitsky A.A."/>
            <person name="Li J.H."/>
            <person name="Li Z."/>
            <person name="Liang Y."/>
            <person name="Lin X."/>
            <person name="Liu X."/>
            <person name="Mattei B."/>
            <person name="McIntosh T.C."/>
            <person name="McLeod M.P."/>
            <person name="McPherson D."/>
            <person name="Merkulov G."/>
            <person name="Milshina N.V."/>
            <person name="Mobarry C."/>
            <person name="Morris J."/>
            <person name="Moshrefi A."/>
            <person name="Mount S.M."/>
            <person name="Moy M."/>
            <person name="Murphy B."/>
            <person name="Murphy L."/>
            <person name="Muzny D.M."/>
            <person name="Nelson D.L."/>
            <person name="Nelson D.R."/>
            <person name="Nelson K.A."/>
            <person name="Nixon K."/>
            <person name="Nusskern D.R."/>
            <person name="Pacleb J.M."/>
            <person name="Palazzolo M."/>
            <person name="Pittman G.S."/>
            <person name="Pan S."/>
            <person name="Pollard J."/>
            <person name="Puri V."/>
            <person name="Reese M.G."/>
            <person name="Reinert K."/>
            <person name="Remington K."/>
            <person name="Saunders R.D.C."/>
            <person name="Scheeler F."/>
            <person name="Shen H."/>
            <person name="Shue B.C."/>
            <person name="Siden-Kiamos I."/>
            <person name="Simpson M."/>
            <person name="Skupski M.P."/>
            <person name="Smith T.J."/>
            <person name="Spier E."/>
            <person name="Spradling A.C."/>
            <person name="Stapleton M."/>
            <person name="Strong R."/>
            <person name="Sun E."/>
            <person name="Svirskas R."/>
            <person name="Tector C."/>
            <person name="Turner R."/>
            <person name="Venter E."/>
            <person name="Wang A.H."/>
            <person name="Wang X."/>
            <person name="Wang Z.-Y."/>
            <person name="Wassarman D.A."/>
            <person name="Weinstock G.M."/>
            <person name="Weissenbach J."/>
            <person name="Williams S.M."/>
            <person name="Woodage T."/>
            <person name="Worley K.C."/>
            <person name="Wu D."/>
            <person name="Yang S."/>
            <person name="Yao Q.A."/>
            <person name="Ye J."/>
            <person name="Yeh R.-F."/>
            <person name="Zaveri J.S."/>
            <person name="Zhan M."/>
            <person name="Zhang G."/>
            <person name="Zhao Q."/>
            <person name="Zheng L."/>
            <person name="Zheng X.H."/>
            <person name="Zhong F.N."/>
            <person name="Zhong W."/>
            <person name="Zhou X."/>
            <person name="Zhu S.C."/>
            <person name="Zhu X."/>
            <person name="Smith H.O."/>
            <person name="Gibbs R.A."/>
            <person name="Myers E.W."/>
            <person name="Rubin G.M."/>
            <person name="Venter J.C."/>
        </authorList>
    </citation>
    <scope>NUCLEOTIDE SEQUENCE [LARGE SCALE GENOMIC DNA]</scope>
    <source>
        <strain>Berkeley</strain>
    </source>
</reference>
<reference key="2">
    <citation type="journal article" date="2002" name="Genome Biol.">
        <title>Annotation of the Drosophila melanogaster euchromatic genome: a systematic review.</title>
        <authorList>
            <person name="Misra S."/>
            <person name="Crosby M.A."/>
            <person name="Mungall C.J."/>
            <person name="Matthews B.B."/>
            <person name="Campbell K.S."/>
            <person name="Hradecky P."/>
            <person name="Huang Y."/>
            <person name="Kaminker J.S."/>
            <person name="Millburn G.H."/>
            <person name="Prochnik S.E."/>
            <person name="Smith C.D."/>
            <person name="Tupy J.L."/>
            <person name="Whitfield E.J."/>
            <person name="Bayraktaroglu L."/>
            <person name="Berman B.P."/>
            <person name="Bettencourt B.R."/>
            <person name="Celniker S.E."/>
            <person name="de Grey A.D.N.J."/>
            <person name="Drysdale R.A."/>
            <person name="Harris N.L."/>
            <person name="Richter J."/>
            <person name="Russo S."/>
            <person name="Schroeder A.J."/>
            <person name="Shu S.Q."/>
            <person name="Stapleton M."/>
            <person name="Yamada C."/>
            <person name="Ashburner M."/>
            <person name="Gelbart W.M."/>
            <person name="Rubin G.M."/>
            <person name="Lewis S.E."/>
        </authorList>
    </citation>
    <scope>GENOME REANNOTATION</scope>
    <source>
        <strain>Berkeley</strain>
    </source>
</reference>
<reference key="3">
    <citation type="journal article" date="2002" name="Genome Biol.">
        <title>A Drosophila full-length cDNA resource.</title>
        <authorList>
            <person name="Stapleton M."/>
            <person name="Carlson J.W."/>
            <person name="Brokstein P."/>
            <person name="Yu C."/>
            <person name="Champe M."/>
            <person name="George R.A."/>
            <person name="Guarin H."/>
            <person name="Kronmiller B."/>
            <person name="Pacleb J.M."/>
            <person name="Park S."/>
            <person name="Wan K.H."/>
            <person name="Rubin G.M."/>
            <person name="Celniker S.E."/>
        </authorList>
    </citation>
    <scope>NUCLEOTIDE SEQUENCE [LARGE SCALE MRNA]</scope>
    <source>
        <strain>Berkeley</strain>
        <tissue>Embryo</tissue>
    </source>
</reference>
<reference key="4">
    <citation type="journal article" date="1990" name="J. Biol. Chem.">
        <title>Isolation and characterization of the Drosophila nuclear envelope otefin cDNA.</title>
        <authorList>
            <person name="Padan R."/>
            <person name="Nainudel-Epszteyn S."/>
            <person name="Goitein R."/>
            <person name="Fainsod A."/>
            <person name="Gruenbaum Y."/>
        </authorList>
    </citation>
    <scope>NUCLEOTIDE SEQUENCE [MRNA] OF 4-424</scope>
    <scope>FUNCTION</scope>
    <scope>SUBCELLULAR LOCATION</scope>
    <scope>DEVELOPMENTAL STAGE</scope>
</reference>
<reference key="5">
    <citation type="journal article" date="1989" name="J. Cell Sci.">
        <title>Persistence of major nuclear envelope antigens in an envelope-like structure during mitosis in Drosophila melanogaster embryos.</title>
        <authorList>
            <person name="Harel A."/>
            <person name="Zlotkin E."/>
            <person name="Nainudel-Epszteyn S."/>
            <person name="Feinstein N."/>
            <person name="Fisher P.A."/>
            <person name="Gruenbaum Y."/>
        </authorList>
    </citation>
    <scope>SUBCELLULAR LOCATION</scope>
    <scope>TOPOLOGY</scope>
    <scope>DEVELOPMENTAL STAGE</scope>
</reference>
<reference key="6">
    <citation type="journal article" date="1997" name="J. Biol. Chem.">
        <title>Distinct regions specify the targeting of otefin to the nucleoplasmic side of the nuclear envelope.</title>
        <authorList>
            <person name="Ashery-Padan R."/>
            <person name="Weiss A.M."/>
            <person name="Feinstein N."/>
            <person name="Gruenbaum Y."/>
        </authorList>
    </citation>
    <scope>SUBCELLULAR LOCATION</scope>
</reference>
<reference key="7">
    <citation type="journal article" date="1997" name="Mol. Cell. Biol.">
        <title>Localization and posttranslational modifications of otefin, a protein required for vesicle attachment to chromatin, during Drosophila melanogaster development.</title>
        <authorList>
            <person name="Ashery-Padan R."/>
            <person name="Ulitzur N."/>
            <person name="Arbel A."/>
            <person name="Goldberg M."/>
            <person name="Weiss A.M."/>
            <person name="Maus N."/>
            <person name="Fisher P.A."/>
            <person name="Gruenbaum Y."/>
        </authorList>
    </citation>
    <scope>FUNCTION</scope>
    <scope>SUBCELLULAR LOCATION</scope>
    <scope>TISSUE SPECIFICITY</scope>
    <scope>DEVELOPMENTAL STAGE</scope>
    <scope>PHOSPHORYLATION AT SER-54</scope>
    <scope>MUTAGENESIS OF SER-54</scope>
</reference>
<reference key="8">
    <citation type="journal article" date="1998" name="Mol. Cell. Biol.">
        <title>Interactions among Drosophila nuclear envelope proteins lamin, otefin, and YA.</title>
        <authorList>
            <person name="Goldberg M."/>
            <person name="Lu H."/>
            <person name="Stuurman N."/>
            <person name="Ashery-Padan R."/>
            <person name="Weiss A.M."/>
            <person name="Yu J."/>
            <person name="Bhattacharyya D."/>
            <person name="Fisher P.A."/>
            <person name="Gruenbaum Y."/>
            <person name="Wolfner M.F."/>
        </authorList>
    </citation>
    <scope>INTERACTION WITH LAM</scope>
    <scope>SUBCELLULAR LOCATION</scope>
</reference>
<reference key="9">
    <citation type="journal article" date="2006" name="Eur. J. Cell Biol.">
        <title>The Drosophila melanogaster LEM-domain protein MAN1.</title>
        <authorList>
            <person name="Wagner N."/>
            <person name="Kagermeier B."/>
            <person name="Loserth S."/>
            <person name="Krohne G."/>
        </authorList>
    </citation>
    <scope>SUBCELLULAR LOCATION</scope>
    <scope>DEVELOPMENTAL STAGE</scope>
</reference>
<reference key="10">
    <citation type="journal article" date="2008" name="Dev. Cell">
        <title>Otefin, a nuclear membrane protein, determines the fate of germline stem cells in Drosophila via interaction with Smad complexes.</title>
        <authorList>
            <person name="Jiang X."/>
            <person name="Xia L."/>
            <person name="Chen D."/>
            <person name="Yang Y."/>
            <person name="Huang H."/>
            <person name="Yang L."/>
            <person name="Zhao Q."/>
            <person name="Shen L."/>
            <person name="Wang J."/>
            <person name="Chen D."/>
        </authorList>
    </citation>
    <scope>FUNCTION</scope>
    <scope>INTERACTION WITH MED</scope>
    <scope>SUBCELLULAR LOCATION</scope>
    <scope>TISSUE SPECIFICITY</scope>
    <scope>DISRUPTION PHENOTYPE</scope>
</reference>
<reference key="11">
    <citation type="journal article" date="2008" name="J. Proteome Res.">
        <title>Phosphoproteome analysis of Drosophila melanogaster embryos.</title>
        <authorList>
            <person name="Zhai B."/>
            <person name="Villen J."/>
            <person name="Beausoleil S.A."/>
            <person name="Mintseris J."/>
            <person name="Gygi S.P."/>
        </authorList>
    </citation>
    <scope>PHOSPHORYLATION [LARGE SCALE ANALYSIS] AT SER-44; SER-50; SER-54; SER-192; SER-198; SER-321; THR-324; SER-326; THR-358; SER-378 AND SER-385</scope>
    <scope>IDENTIFICATION BY MASS SPECTROMETRY</scope>
    <source>
        <tissue>Embryo</tissue>
    </source>
</reference>
<reference key="12">
    <citation type="journal article" date="2012" name="Mol. Cell. Biol.">
        <title>Functional analysis of centrosomal kinase substrates in Drosophila melanogaster reveals a new function of the nuclear envelope component otefin in cell cycle progression.</title>
        <authorList>
            <person name="Habermann K."/>
            <person name="Mirgorodskaya E."/>
            <person name="Gobom J."/>
            <person name="Lehmann V."/>
            <person name="Mueller H."/>
            <person name="Bluemlein K."/>
            <person name="Deery M.J."/>
            <person name="Czogiel I."/>
            <person name="Erdmann C."/>
            <person name="Ralser M."/>
            <person name="von Kries J.P."/>
            <person name="Lange B.M."/>
        </authorList>
    </citation>
    <scope>PHOSPHORYLATION AT SER-44; THR-63; SER-152 AND SER-378</scope>
    <scope>FUNCTION</scope>
    <scope>INTERACTION WITH AURA; LAM; ALPHATUB84B; GAMMATUB23C; GAMMATUB37C</scope>
    <scope>SUBCELLULAR LOCATION</scope>
    <scope>MUTAGENESIS OF THR-63</scope>
</reference>
<reference key="13">
    <citation type="journal article" date="2013" name="Dev. Cell">
        <title>The Drosophila nuclear lamina protein otefin is required for germline stem cell survival.</title>
        <authorList>
            <person name="Barton L.J."/>
            <person name="Pinto B.S."/>
            <person name="Wallrath L.L."/>
            <person name="Geyer P.K."/>
        </authorList>
    </citation>
    <scope>FUNCTION</scope>
    <scope>DISRUPTION PHENOTYPE</scope>
</reference>
<reference key="14">
    <citation type="journal article" date="2014" name="Genetics">
        <title>Unique and shared functions of nuclear lamina LEM domain proteins in Drosophila.</title>
        <authorList>
            <person name="Barton L.J."/>
            <person name="Wilmington S.R."/>
            <person name="Martin M.J."/>
            <person name="Skopec H.M."/>
            <person name="Lovander K.E."/>
            <person name="Pinto B.S."/>
            <person name="Geyer P.K."/>
        </authorList>
    </citation>
    <scope>FUNCTION</scope>
    <scope>DISRUPTION PHENOTYPE</scope>
</reference>
<reference key="15">
    <citation type="journal article" date="2016" name="Dev. Biol.">
        <title>Drosophila male and female germline stem cell niches require the nuclear lamina protein Otefin.</title>
        <authorList>
            <person name="Barton L.J."/>
            <person name="Lovander K.E."/>
            <person name="Pinto B.S."/>
            <person name="Geyer P.K."/>
        </authorList>
    </citation>
    <scope>FUNCTION</scope>
    <scope>SUBCELLULAR LOCATION</scope>
    <scope>TISSUE SPECIFICITY</scope>
    <scope>DISRUPTION PHENOTYPE</scope>
</reference>
<reference key="16">
    <citation type="journal article" date="2020" name="Sci. Adv.">
        <title>The NEMP family supports metazoan fertility and nuclear envelope stiffness.</title>
        <authorList>
            <person name="Tsatskis Y."/>
            <person name="Rosenfeld R."/>
            <person name="Pearson J.D."/>
            <person name="Boswell C."/>
            <person name="Qu Y."/>
            <person name="Kim K."/>
            <person name="Fabian L."/>
            <person name="Mohammad A."/>
            <person name="Wang X."/>
            <person name="Robson M.I."/>
            <person name="Krchma K."/>
            <person name="Wu J."/>
            <person name="Goncalves J."/>
            <person name="Hodzic D."/>
            <person name="Wu S."/>
            <person name="Potter D."/>
            <person name="Pelletier L."/>
            <person name="Dunham W.H."/>
            <person name="Gingras A.C."/>
            <person name="Sun Y."/>
            <person name="Meng J."/>
            <person name="Godt D."/>
            <person name="Schedl T."/>
            <person name="Ciruna B."/>
            <person name="Choi K."/>
            <person name="Perry J.R.B."/>
            <person name="Bremner R."/>
            <person name="Schirmer E.C."/>
            <person name="Brill J.A."/>
            <person name="Jurisicova A."/>
            <person name="McNeill H."/>
        </authorList>
    </citation>
    <scope>INTERACTION WITH NEMP</scope>
</reference>
<feature type="chain" id="PRO_0000206151" description="Otefin">
    <location>
        <begin position="1"/>
        <end position="424"/>
    </location>
</feature>
<feature type="domain" description="LEM" evidence="2">
    <location>
        <begin position="1"/>
        <end position="30"/>
    </location>
</feature>
<feature type="region of interest" description="Required for binding to Med and germline stem cell maintenance" evidence="6">
    <location>
        <begin position="1"/>
        <end position="50"/>
    </location>
</feature>
<feature type="region of interest" description="Disordered" evidence="3">
    <location>
        <begin position="42"/>
        <end position="186"/>
    </location>
</feature>
<feature type="region of interest" description="Disordered" evidence="3">
    <location>
        <begin position="259"/>
        <end position="278"/>
    </location>
</feature>
<feature type="region of interest" description="Required for binding to Med" evidence="6">
    <location>
        <begin position="271"/>
        <end position="400"/>
    </location>
</feature>
<feature type="region of interest" description="Essential for nuclear membrane localization and germline stem cell maintenance" evidence="6">
    <location>
        <begin position="400"/>
        <end position="424"/>
    </location>
</feature>
<feature type="region of interest" description="Essential for nuclear membrane localization" evidence="14">
    <location>
        <begin position="406"/>
        <end position="424"/>
    </location>
</feature>
<feature type="short sequence motif" description="Nuclear localization signal" evidence="1">
    <location>
        <begin position="92"/>
        <end position="99"/>
    </location>
</feature>
<feature type="compositionally biased region" description="Low complexity" evidence="3">
    <location>
        <begin position="65"/>
        <end position="80"/>
    </location>
</feature>
<feature type="compositionally biased region" description="Basic and acidic residues" evidence="3">
    <location>
        <begin position="103"/>
        <end position="133"/>
    </location>
</feature>
<feature type="compositionally biased region" description="Basic and acidic residues" evidence="3">
    <location>
        <begin position="157"/>
        <end position="170"/>
    </location>
</feature>
<feature type="compositionally biased region" description="Low complexity" evidence="3">
    <location>
        <begin position="262"/>
        <end position="274"/>
    </location>
</feature>
<feature type="modified residue" description="Phosphoserine" evidence="5 8">
    <location>
        <position position="44"/>
    </location>
</feature>
<feature type="modified residue" description="Phosphoserine" evidence="5 15">
    <location>
        <position position="50"/>
    </location>
</feature>
<feature type="modified residue" description="Phosphoserine" evidence="5">
    <location>
        <position position="54"/>
    </location>
</feature>
<feature type="modified residue" description="Phosphothreonine" evidence="8">
    <location>
        <position position="63"/>
    </location>
</feature>
<feature type="modified residue" description="Phosphoserine" evidence="8">
    <location>
        <position position="152"/>
    </location>
</feature>
<feature type="modified residue" description="Phosphoserine" evidence="5">
    <location>
        <position position="192"/>
    </location>
</feature>
<feature type="modified residue" description="Phosphoserine" evidence="5">
    <location>
        <position position="198"/>
    </location>
</feature>
<feature type="modified residue" description="Phosphoserine" evidence="5">
    <location>
        <position position="321"/>
    </location>
</feature>
<feature type="modified residue" description="Phosphothreonine" evidence="5">
    <location>
        <position position="324"/>
    </location>
</feature>
<feature type="modified residue" description="Phosphoserine" evidence="5">
    <location>
        <position position="326"/>
    </location>
</feature>
<feature type="modified residue" description="Phosphothreonine" evidence="5">
    <location>
        <position position="358"/>
    </location>
</feature>
<feature type="modified residue" description="Phosphoserine" evidence="5 8">
    <location>
        <position position="378"/>
    </location>
</feature>
<feature type="modified residue" description="Phosphoserine" evidence="5">
    <location>
        <position position="385"/>
    </location>
</feature>
<feature type="mutagenesis site" description="Loss of phosphorylation by Cdk1." evidence="15">
    <original>S</original>
    <variation>A</variation>
    <location>
        <position position="54"/>
    </location>
</feature>
<feature type="mutagenesis site" description="Prevents phosphorylation and displays an increase in the number of mitotic cells." evidence="8">
    <original>T</original>
    <variation>A</variation>
    <location>
        <position position="63"/>
    </location>
</feature>
<feature type="mutagenesis site" description="Phosphomimetic mutant which displays a decrease in the number of mitotic cells." evidence="8">
    <original>T</original>
    <variation>E</variation>
    <location>
        <position position="63"/>
    </location>
</feature>
<feature type="sequence conflict" description="In Ref. 1; CAA35530." evidence="18" ref="1">
    <original>I</original>
    <variation>V</variation>
    <location>
        <position position="116"/>
    </location>
</feature>
<feature type="sequence conflict" description="In Ref. 1; CAA35530." evidence="18" ref="1">
    <original>D</original>
    <variation>E</variation>
    <location>
        <position position="121"/>
    </location>
</feature>
<feature type="sequence conflict" description="In Ref. 1; CAA35530." evidence="18" ref="1">
    <original>S</original>
    <variation>P</variation>
    <location>
        <position position="128"/>
    </location>
</feature>
<feature type="sequence conflict" description="In Ref. 1; CAA35530." evidence="18" ref="1">
    <original>P</original>
    <variation>S</variation>
    <location>
        <position position="141"/>
    </location>
</feature>
<feature type="sequence conflict" description="In Ref. 1; CAA35530." evidence="18" ref="1">
    <original>T</original>
    <variation>S</variation>
    <location>
        <position position="151"/>
    </location>
</feature>
<feature type="sequence conflict" description="In Ref. 1; CAA35530." evidence="18" ref="1">
    <original>N</original>
    <variation>K</variation>
    <location>
        <position position="186"/>
    </location>
</feature>
<feature type="sequence conflict" description="In Ref. 1; CAA35530." evidence="18" ref="1">
    <original>A</original>
    <variation>S</variation>
    <location>
        <position position="254"/>
    </location>
</feature>
<feature type="sequence conflict" description="In Ref. 1; CAA35530." evidence="18" ref="1">
    <original>T</original>
    <variation>H</variation>
    <location>
        <position position="292"/>
    </location>
</feature>
<feature type="sequence conflict" description="In Ref. 1; CAA35530." evidence="18" ref="1">
    <original>A</original>
    <variation>S</variation>
    <location>
        <position position="344"/>
    </location>
</feature>
<feature type="sequence conflict" description="In Ref. 1; CAA35530." evidence="18" ref="1">
    <original>L</original>
    <variation>V</variation>
    <location>
        <position position="412"/>
    </location>
</feature>
<keyword id="KW-0131">Cell cycle</keyword>
<keyword id="KW-0132">Cell division</keyword>
<keyword id="KW-0158">Chromosome</keyword>
<keyword id="KW-0963">Cytoplasm</keyword>
<keyword id="KW-0206">Cytoskeleton</keyword>
<keyword id="KW-0472">Membrane</keyword>
<keyword id="KW-0498">Mitosis</keyword>
<keyword id="KW-0539">Nucleus</keyword>
<keyword id="KW-0597">Phosphoprotein</keyword>
<keyword id="KW-1185">Reference proteome</keyword>
<organism>
    <name type="scientific">Drosophila melanogaster</name>
    <name type="common">Fruit fly</name>
    <dbReference type="NCBI Taxonomy" id="7227"/>
    <lineage>
        <taxon>Eukaryota</taxon>
        <taxon>Metazoa</taxon>
        <taxon>Ecdysozoa</taxon>
        <taxon>Arthropoda</taxon>
        <taxon>Hexapoda</taxon>
        <taxon>Insecta</taxon>
        <taxon>Pterygota</taxon>
        <taxon>Neoptera</taxon>
        <taxon>Endopterygota</taxon>
        <taxon>Diptera</taxon>
        <taxon>Brachycera</taxon>
        <taxon>Muscomorpha</taxon>
        <taxon>Ephydroidea</taxon>
        <taxon>Drosophilidae</taxon>
        <taxon>Drosophila</taxon>
        <taxon>Sophophora</taxon>
    </lineage>
</organism>
<comment type="function">
    <text evidence="6 7 8 9 10 12 15">Inner nuclear membrane protein (PubMed:18410727, PubMed:2186029, PubMed:22751930, PubMed:9199347). Involved in the attachment of membrane vesicles to chromatin during nuclear assembly, and is probably required for centrosome maturation and cell cycle progression during mitosis (PubMed:22751930, PubMed:9199347). Essential for differentiation of certain tissues and the maintenance of progenitor cell populations (PubMed:18410727, PubMed:23806619, PubMed:24700158, PubMed:27174470). Required for the differentiation and maintenance of male and female germline stem cells (GSCs), as well as the maintenance of somatic cells in the GSC niche (PubMed:18410727, PubMed:23806619, PubMed:27174470). This role is likely to be independent of the BMP (Dpp) pathway that negatively regulates bam transcription during GSC differentiation (PubMed:18410727, PubMed:23806619). During development, plays essential and redundant functions with the other LEM domain proteins; bocks and MAN1 (PubMed:24700158). Also has a redundant but important role with bocks during larval development (PubMed:24700158).</text>
</comment>
<comment type="subunit">
    <text evidence="6 8 13 16">Interacts with Med (PubMed:18410727). Interacts with Lam (PubMed:22751930, PubMed:9632815). Interacts with aurA, alphaTub84B, gammaTub23C and gammaTub37C (PubMed:22751930). Interacts with Nemp (PubMed:32923640).</text>
</comment>
<comment type="subcellular location">
    <subcellularLocation>
        <location evidence="4 6 8 11 12 14 15 16">Nucleus inner membrane</location>
        <topology evidence="11 14 15">Peripheral membrane protein</topology>
        <orientation evidence="11">Nucleoplasmic side</orientation>
    </subcellularLocation>
    <subcellularLocation>
        <location evidence="14">Nucleus</location>
        <location evidence="14">Nucleoplasm</location>
    </subcellularLocation>
    <subcellularLocation>
        <location evidence="8 15">Cytoplasm</location>
    </subcellularLocation>
    <subcellularLocation>
        <location evidence="8 11">Chromosome</location>
    </subcellularLocation>
    <subcellularLocation>
        <location evidence="4 7 8">Cytoplasm</location>
        <location evidence="4 7 8">Cytoskeleton</location>
        <location evidence="4 7 8">Spindle pole</location>
    </subcellularLocation>
    <subcellularLocation>
        <location evidence="8">Cytoplasm</location>
        <location evidence="8">Cytoskeleton</location>
        <location evidence="8">Microtubule organizing center</location>
        <location evidence="8">Centrosome</location>
    </subcellularLocation>
    <text evidence="7 8 11 15">Component of the spindle envelope during early mitotic cycles (PubMed:2186029, PubMed:2517292). Following nuclear envelope breakdown, becomes dispersed in the cytoplasm and concentrated at the spindle poles (PubMed:22751930, PubMed:2517292). At anaphase (when the nuclear envelope begins to reassemble), locates to the chromosomes accumulating first in areas adjacent to centrosomes and at the peripheral sites of the chromosomes (PubMed:22751930, PubMed:2517292). At telophase, expressed as a continuous rim around the chromatin and increased expression in the midspindle area (PubMed:22751930). During cytokinesis, locates to the nuclear periphery with some remaining in the cytoplasm and at the mid-body (PubMed:22751930). At stage 4 of egg development, expression in the oocyte nuclear envelope is higher than in the nurse nuclear envelope (PubMed:9199347). Expression in oocyte cytoplasm increases after stages 6 to 7 of egg development (PubMed:9199347).</text>
</comment>
<comment type="tissue specificity">
    <text evidence="6 12 15">Expressed in all cell types of the germarium and testis (PubMed:18410727, PubMed:27174470). Expressed in nurse cells, follicle cells and oocytes (PubMed:9199347).</text>
</comment>
<comment type="developmental stage">
    <text evidence="4 7 11 15">Relatively high levels of expression in eggs and 1st instar larvae compared to pupal and adult stages, with weak expression in 2nd instar larvae (at protein level) (PubMed:16439308). Expressed throughout development in all somatic cells (PubMed:9199347). Highest levels of expression in embryos and weak expression in larvae and adults (PubMed:2186029, PubMed:9199347). Expressed throughout development (at protein level) (PubMed:2517292).</text>
</comment>
<comment type="PTM">
    <text evidence="8 15">Phosphorylation at Thr-63 by aurA may be required for exit from mitosis (PubMed:22751930). May be phosphorylated by Cdk1 and Pka-C1 (PubMed:9199347).</text>
</comment>
<comment type="disruption phenotype">
    <text evidence="6 9 10 12">No obvious phenotype (PubMed:18410727, PubMed:23806619, PubMed:24700158). However females are sterile and aging males become prematurely sterile (PubMed:18410727, PubMed:23806619). Males and females exhibit a range of defects in their germarium that may be age dependent phenotypes (PubMed:18410727, PubMed:23806619, PubMed:27174470). Most phenotypes result from defects in germline stem cell (GSC) differentiation that often lead to GSC loss (PubMed:23806619, PubMed:27174470). Also affects somatic cells of the ovarian stem cell niche, with delayed terminal filament formation and cap cell loss (PubMed:27174470). In 10 day old males, stem cell niches display a decrease in hub cell number but somatic cyst stem cells are unaffected (PubMed:27174470). No significant decrease in adult survival, however double mutants with either bocks or Man1 do not survive to the adult stage (PubMed:24700158). Double bocks and Ote mutant larvae have small brains, their imaginal disks are reduced in size or absent, and only 10% of second-instar larvae reach the pupal stage (PubMed:24700158). In Ote and MAN1 double mutants, pupal survival and larval development is unaffected (PubMed:24700158).</text>
</comment>
<comment type="sequence caution" evidence="18">
    <conflict type="erroneous initiation">
        <sequence resource="EMBL-CDS" id="CAA35530"/>
    </conflict>
    <text>Truncated N-terminus.</text>
</comment>
<accession>P20240</accession>
<accession>Q9V8E5</accession>
<dbReference type="EMBL" id="AE013599">
    <property type="protein sequence ID" value="AAF57722.3"/>
    <property type="molecule type" value="Genomic_DNA"/>
</dbReference>
<dbReference type="EMBL" id="AY051940">
    <property type="protein sequence ID" value="AAK93364.1"/>
    <property type="molecule type" value="mRNA"/>
</dbReference>
<dbReference type="EMBL" id="X17495">
    <property type="protein sequence ID" value="CAA35530.1"/>
    <property type="status" value="ALT_INIT"/>
    <property type="molecule type" value="mRNA"/>
</dbReference>
<dbReference type="PIR" id="A35360">
    <property type="entry name" value="A35360"/>
</dbReference>
<dbReference type="RefSeq" id="NP_476664.2">
    <property type="nucleotide sequence ID" value="NM_057316.5"/>
</dbReference>
<dbReference type="SMR" id="P20240"/>
<dbReference type="BioGRID" id="62771">
    <property type="interactions" value="37"/>
</dbReference>
<dbReference type="FunCoup" id="P20240">
    <property type="interactions" value="3"/>
</dbReference>
<dbReference type="IntAct" id="P20240">
    <property type="interactions" value="27"/>
</dbReference>
<dbReference type="MINT" id="P20240"/>
<dbReference type="STRING" id="7227.FBpp0085947"/>
<dbReference type="iPTMnet" id="P20240"/>
<dbReference type="PaxDb" id="7227-FBpp0085947"/>
<dbReference type="DNASU" id="37090"/>
<dbReference type="EnsemblMetazoa" id="FBtr0086768">
    <property type="protein sequence ID" value="FBpp0085947"/>
    <property type="gene ID" value="FBgn0266420"/>
</dbReference>
<dbReference type="GeneID" id="37090"/>
<dbReference type="KEGG" id="dme:Dmel_CG5581"/>
<dbReference type="UCSC" id="CG5581-RA">
    <property type="organism name" value="d. melanogaster"/>
</dbReference>
<dbReference type="AGR" id="FB:FBgn0266420"/>
<dbReference type="CTD" id="37090"/>
<dbReference type="FlyBase" id="FBgn0266420">
    <property type="gene designation" value="Ote"/>
</dbReference>
<dbReference type="VEuPathDB" id="VectorBase:FBgn0266420"/>
<dbReference type="eggNOG" id="ENOG502TAEI">
    <property type="taxonomic scope" value="Eukaryota"/>
</dbReference>
<dbReference type="GeneTree" id="ENSGT00530000067345"/>
<dbReference type="HOGENOM" id="CLU_652607_0_0_1"/>
<dbReference type="InParanoid" id="P20240"/>
<dbReference type="OMA" id="EPRRPTY"/>
<dbReference type="OrthoDB" id="8068829at2759"/>
<dbReference type="PhylomeDB" id="P20240"/>
<dbReference type="SignaLink" id="P20240"/>
<dbReference type="BioGRID-ORCS" id="37090">
    <property type="hits" value="1 hit in 1 CRISPR screen"/>
</dbReference>
<dbReference type="GenomeRNAi" id="37090"/>
<dbReference type="PRO" id="PR:P20240"/>
<dbReference type="Proteomes" id="UP000000803">
    <property type="component" value="Chromosome 2R"/>
</dbReference>
<dbReference type="Bgee" id="FBgn0266420">
    <property type="expression patterns" value="Expressed in egg cell and 47 other cell types or tissues"/>
</dbReference>
<dbReference type="GO" id="GO:0005813">
    <property type="term" value="C:centrosome"/>
    <property type="evidence" value="ECO:0007669"/>
    <property type="project" value="UniProtKB-SubCell"/>
</dbReference>
<dbReference type="GO" id="GO:0005694">
    <property type="term" value="C:chromosome"/>
    <property type="evidence" value="ECO:0007669"/>
    <property type="project" value="UniProtKB-SubCell"/>
</dbReference>
<dbReference type="GO" id="GO:0005737">
    <property type="term" value="C:cytoplasm"/>
    <property type="evidence" value="ECO:0007669"/>
    <property type="project" value="UniProtKB-SubCell"/>
</dbReference>
<dbReference type="GO" id="GO:0012505">
    <property type="term" value="C:endomembrane system"/>
    <property type="evidence" value="ECO:0007005"/>
    <property type="project" value="FlyBase"/>
</dbReference>
<dbReference type="GO" id="GO:0005641">
    <property type="term" value="C:nuclear envelope lumen"/>
    <property type="evidence" value="ECO:0000314"/>
    <property type="project" value="UniProtKB"/>
</dbReference>
<dbReference type="GO" id="GO:0005637">
    <property type="term" value="C:nuclear inner membrane"/>
    <property type="evidence" value="ECO:0000314"/>
    <property type="project" value="FlyBase"/>
</dbReference>
<dbReference type="GO" id="GO:0031965">
    <property type="term" value="C:nuclear membrane"/>
    <property type="evidence" value="ECO:0000314"/>
    <property type="project" value="FlyBase"/>
</dbReference>
<dbReference type="GO" id="GO:0034399">
    <property type="term" value="C:nuclear periphery"/>
    <property type="evidence" value="ECO:0000314"/>
    <property type="project" value="FlyBase"/>
</dbReference>
<dbReference type="GO" id="GO:0005654">
    <property type="term" value="C:nucleoplasm"/>
    <property type="evidence" value="ECO:0007669"/>
    <property type="project" value="UniProtKB-SubCell"/>
</dbReference>
<dbReference type="GO" id="GO:0000922">
    <property type="term" value="C:spindle pole"/>
    <property type="evidence" value="ECO:0007669"/>
    <property type="project" value="UniProtKB-SubCell"/>
</dbReference>
<dbReference type="GO" id="GO:0140297">
    <property type="term" value="F:DNA-binding transcription factor binding"/>
    <property type="evidence" value="ECO:0000353"/>
    <property type="project" value="FlyBase"/>
</dbReference>
<dbReference type="GO" id="GO:0003714">
    <property type="term" value="F:transcription corepressor activity"/>
    <property type="evidence" value="ECO:0000315"/>
    <property type="project" value="FlyBase"/>
</dbReference>
<dbReference type="GO" id="GO:0051301">
    <property type="term" value="P:cell division"/>
    <property type="evidence" value="ECO:0007669"/>
    <property type="project" value="UniProtKB-KW"/>
</dbReference>
<dbReference type="GO" id="GO:0030718">
    <property type="term" value="P:germ-line stem cell population maintenance"/>
    <property type="evidence" value="ECO:0000315"/>
    <property type="project" value="FlyBase"/>
</dbReference>
<dbReference type="GO" id="GO:0060250">
    <property type="term" value="P:germ-line stem-cell niche homeostasis"/>
    <property type="evidence" value="ECO:0000315"/>
    <property type="project" value="FlyBase"/>
</dbReference>
<dbReference type="GO" id="GO:0045892">
    <property type="term" value="P:negative regulation of DNA-templated transcription"/>
    <property type="evidence" value="ECO:0000315"/>
    <property type="project" value="FlyBase"/>
</dbReference>
<dbReference type="GO" id="GO:0031468">
    <property type="term" value="P:nuclear membrane reassembly"/>
    <property type="evidence" value="ECO:0000314"/>
    <property type="project" value="FlyBase"/>
</dbReference>
<dbReference type="GO" id="GO:0048477">
    <property type="term" value="P:oogenesis"/>
    <property type="evidence" value="ECO:0007001"/>
    <property type="project" value="FlyBase"/>
</dbReference>
<dbReference type="GO" id="GO:0030513">
    <property type="term" value="P:positive regulation of BMP signaling pathway"/>
    <property type="evidence" value="ECO:0000316"/>
    <property type="project" value="FlyBase"/>
</dbReference>
<dbReference type="CDD" id="cd12934">
    <property type="entry name" value="LEM"/>
    <property type="match status" value="1"/>
</dbReference>
<dbReference type="Gene3D" id="1.10.720.40">
    <property type="match status" value="1"/>
</dbReference>
<dbReference type="InterPro" id="IPR011015">
    <property type="entry name" value="LEM/LEM-like_dom_sf"/>
</dbReference>
<dbReference type="InterPro" id="IPR003887">
    <property type="entry name" value="LEM_dom"/>
</dbReference>
<dbReference type="Pfam" id="PF03020">
    <property type="entry name" value="LEM"/>
    <property type="match status" value="1"/>
</dbReference>
<dbReference type="SMART" id="SM00540">
    <property type="entry name" value="LEM"/>
    <property type="match status" value="1"/>
</dbReference>
<dbReference type="SUPFAM" id="SSF63451">
    <property type="entry name" value="LEM domain"/>
    <property type="match status" value="1"/>
</dbReference>
<dbReference type="PROSITE" id="PS50954">
    <property type="entry name" value="LEM"/>
    <property type="match status" value="1"/>
</dbReference>
<evidence type="ECO:0000255" key="1"/>
<evidence type="ECO:0000255" key="2">
    <source>
        <dbReference type="PROSITE-ProRule" id="PRU00313"/>
    </source>
</evidence>
<evidence type="ECO:0000256" key="3">
    <source>
        <dbReference type="SAM" id="MobiDB-lite"/>
    </source>
</evidence>
<evidence type="ECO:0000269" key="4">
    <source>
    </source>
</evidence>
<evidence type="ECO:0000269" key="5">
    <source>
    </source>
</evidence>
<evidence type="ECO:0000269" key="6">
    <source>
    </source>
</evidence>
<evidence type="ECO:0000269" key="7">
    <source>
    </source>
</evidence>
<evidence type="ECO:0000269" key="8">
    <source>
    </source>
</evidence>
<evidence type="ECO:0000269" key="9">
    <source>
    </source>
</evidence>
<evidence type="ECO:0000269" key="10">
    <source>
    </source>
</evidence>
<evidence type="ECO:0000269" key="11">
    <source>
    </source>
</evidence>
<evidence type="ECO:0000269" key="12">
    <source>
    </source>
</evidence>
<evidence type="ECO:0000269" key="13">
    <source>
    </source>
</evidence>
<evidence type="ECO:0000269" key="14">
    <source>
    </source>
</evidence>
<evidence type="ECO:0000269" key="15">
    <source>
    </source>
</evidence>
<evidence type="ECO:0000269" key="16">
    <source>
    </source>
</evidence>
<evidence type="ECO:0000303" key="17">
    <source>
    </source>
</evidence>
<evidence type="ECO:0000305" key="18"/>
<evidence type="ECO:0000312" key="19">
    <source>
        <dbReference type="FlyBase" id="FBgn0266420"/>
    </source>
</evidence>
<proteinExistence type="evidence at protein level"/>
<name>OTE_DROME</name>
<sequence length="424" mass="46584">MADVDDFDSLSNAELRAKMLAQGLPNIPVTDSSRKVLVKRLRASIGGQASPAASPKKTNRRETLAPAPGAPSAPAAASTPVDKLDGNKVAPATKARRTITAAEAKEPVRRLPEEAIRRRPDEADRLRSEEPVAARKPTTAPAAQPVQTRRTSTSSGSERKVVEPLRKPETIVEQPASSKRADREENYLKVNSLIVLESDEEEDEQLVQAADLVEQEHAARQKTTKLASSGTTTYEYKSKVVEPPRRQVYEATAAPVLPPSVPSARAQTTSSTRSYDYASNPAPGRYSSFVRTAAQGYVTAEAPPVASYSSSYKRTYANELSDDTDSKEDQYESTFARNLARLRAERIGDRISPYSRRTLASGNAGSGSLGYEPRARRSLRPNDNSVSEAFNRWLNSLEQKYHIKSKLFIVLLVLLLIGVYYIFY</sequence>
<gene>
    <name evidence="17 19" type="primary">Ote</name>
    <name evidence="19" type="ORF">CG5581</name>
</gene>
<protein>
    <recommendedName>
        <fullName evidence="17">Otefin</fullName>
    </recommendedName>
    <alternativeName>
        <fullName evidence="18">LEM domain-containing protein Otefin</fullName>
    </alternativeName>
</protein>